<proteinExistence type="inferred from homology"/>
<sequence length="260" mass="26404">MQRNGLIGDTIRSLGFLSRLPLPQGWFDNTDDSLPRNARAFPLAGGILGLLAGVALLIANAISLPPLAAALIAIGALAAMTGALHEDGLGDTADGFFGASTPDRRLDIMKDSRIGTFAALTLVIWTGVKASLLMAIIARAGAGYALLALIGTEAASRAGMLAFWHALPSARPGGLADSMGQPQWETVVCGCGLGLALLAIGFLPSGGMVALINALVLMTVVLFGFARLCMAKIGGQTGDTLGAAQQIGSLAALIGLVMAL</sequence>
<feature type="chain" id="PRO_1000083253" description="Adenosylcobinamide-GDP ribazoletransferase">
    <location>
        <begin position="1"/>
        <end position="260"/>
    </location>
</feature>
<feature type="transmembrane region" description="Helical" evidence="1">
    <location>
        <begin position="42"/>
        <end position="62"/>
    </location>
</feature>
<feature type="transmembrane region" description="Helical" evidence="1">
    <location>
        <begin position="64"/>
        <end position="84"/>
    </location>
</feature>
<feature type="transmembrane region" description="Helical" evidence="1">
    <location>
        <begin position="117"/>
        <end position="137"/>
    </location>
</feature>
<feature type="transmembrane region" description="Helical" evidence="1">
    <location>
        <begin position="144"/>
        <end position="164"/>
    </location>
</feature>
<feature type="transmembrane region" description="Helical" evidence="1">
    <location>
        <begin position="192"/>
        <end position="212"/>
    </location>
</feature>
<feature type="transmembrane region" description="Helical" evidence="1">
    <location>
        <begin position="214"/>
        <end position="234"/>
    </location>
</feature>
<feature type="transmembrane region" description="Helical" evidence="1">
    <location>
        <begin position="240"/>
        <end position="260"/>
    </location>
</feature>
<keyword id="KW-0997">Cell inner membrane</keyword>
<keyword id="KW-1003">Cell membrane</keyword>
<keyword id="KW-0169">Cobalamin biosynthesis</keyword>
<keyword id="KW-0460">Magnesium</keyword>
<keyword id="KW-0472">Membrane</keyword>
<keyword id="KW-1185">Reference proteome</keyword>
<keyword id="KW-0808">Transferase</keyword>
<keyword id="KW-0812">Transmembrane</keyword>
<keyword id="KW-1133">Transmembrane helix</keyword>
<protein>
    <recommendedName>
        <fullName evidence="1">Adenosylcobinamide-GDP ribazoletransferase</fullName>
        <ecNumber evidence="1">2.7.8.26</ecNumber>
    </recommendedName>
    <alternativeName>
        <fullName evidence="1">Cobalamin synthase</fullName>
    </alternativeName>
    <alternativeName>
        <fullName evidence="1">Cobalamin-5'-phosphate synthase</fullName>
    </alternativeName>
</protein>
<dbReference type="EC" id="2.7.8.26" evidence="1"/>
<dbReference type="EMBL" id="CP000872">
    <property type="protein sequence ID" value="ABX61942.1"/>
    <property type="molecule type" value="Genomic_DNA"/>
</dbReference>
<dbReference type="RefSeq" id="WP_002963996.1">
    <property type="nucleotide sequence ID" value="NC_010103.1"/>
</dbReference>
<dbReference type="KEGG" id="bcs:BCAN_A0880"/>
<dbReference type="HOGENOM" id="CLU_057426_1_0_5"/>
<dbReference type="PhylomeDB" id="A9MAN9"/>
<dbReference type="UniPathway" id="UPA00148">
    <property type="reaction ID" value="UER00238"/>
</dbReference>
<dbReference type="Proteomes" id="UP000001385">
    <property type="component" value="Chromosome I"/>
</dbReference>
<dbReference type="GO" id="GO:0005886">
    <property type="term" value="C:plasma membrane"/>
    <property type="evidence" value="ECO:0007669"/>
    <property type="project" value="UniProtKB-SubCell"/>
</dbReference>
<dbReference type="GO" id="GO:0051073">
    <property type="term" value="F:adenosylcobinamide-GDP ribazoletransferase activity"/>
    <property type="evidence" value="ECO:0007669"/>
    <property type="project" value="UniProtKB-UniRule"/>
</dbReference>
<dbReference type="GO" id="GO:0008818">
    <property type="term" value="F:cobalamin 5'-phosphate synthase activity"/>
    <property type="evidence" value="ECO:0007669"/>
    <property type="project" value="UniProtKB-UniRule"/>
</dbReference>
<dbReference type="GO" id="GO:0009236">
    <property type="term" value="P:cobalamin biosynthetic process"/>
    <property type="evidence" value="ECO:0007669"/>
    <property type="project" value="UniProtKB-UniRule"/>
</dbReference>
<dbReference type="HAMAP" id="MF_00719">
    <property type="entry name" value="CobS"/>
    <property type="match status" value="1"/>
</dbReference>
<dbReference type="InterPro" id="IPR003805">
    <property type="entry name" value="CobS"/>
</dbReference>
<dbReference type="NCBIfam" id="TIGR00317">
    <property type="entry name" value="cobS"/>
    <property type="match status" value="1"/>
</dbReference>
<dbReference type="NCBIfam" id="NF001276">
    <property type="entry name" value="PRK00235.1-2"/>
    <property type="match status" value="1"/>
</dbReference>
<dbReference type="PANTHER" id="PTHR34148">
    <property type="entry name" value="ADENOSYLCOBINAMIDE-GDP RIBAZOLETRANSFERASE"/>
    <property type="match status" value="1"/>
</dbReference>
<dbReference type="PANTHER" id="PTHR34148:SF1">
    <property type="entry name" value="ADENOSYLCOBINAMIDE-GDP RIBAZOLETRANSFERASE"/>
    <property type="match status" value="1"/>
</dbReference>
<dbReference type="Pfam" id="PF02654">
    <property type="entry name" value="CobS"/>
    <property type="match status" value="1"/>
</dbReference>
<evidence type="ECO:0000255" key="1">
    <source>
        <dbReference type="HAMAP-Rule" id="MF_00719"/>
    </source>
</evidence>
<gene>
    <name evidence="1" type="primary">cobS</name>
    <name type="ordered locus">BCAN_A0880</name>
</gene>
<accession>A9MAN9</accession>
<comment type="function">
    <text evidence="1">Joins adenosylcobinamide-GDP and alpha-ribazole to generate adenosylcobalamin (Ado-cobalamin). Also synthesizes adenosylcobalamin 5'-phosphate from adenosylcobinamide-GDP and alpha-ribazole 5'-phosphate.</text>
</comment>
<comment type="catalytic activity">
    <reaction evidence="1">
        <text>alpha-ribazole + adenosylcob(III)inamide-GDP = adenosylcob(III)alamin + GMP + H(+)</text>
        <dbReference type="Rhea" id="RHEA:16049"/>
        <dbReference type="ChEBI" id="CHEBI:10329"/>
        <dbReference type="ChEBI" id="CHEBI:15378"/>
        <dbReference type="ChEBI" id="CHEBI:18408"/>
        <dbReference type="ChEBI" id="CHEBI:58115"/>
        <dbReference type="ChEBI" id="CHEBI:60487"/>
        <dbReference type="EC" id="2.7.8.26"/>
    </reaction>
</comment>
<comment type="catalytic activity">
    <reaction evidence="1">
        <text>alpha-ribazole 5'-phosphate + adenosylcob(III)inamide-GDP = adenosylcob(III)alamin 5'-phosphate + GMP + H(+)</text>
        <dbReference type="Rhea" id="RHEA:23560"/>
        <dbReference type="ChEBI" id="CHEBI:15378"/>
        <dbReference type="ChEBI" id="CHEBI:57918"/>
        <dbReference type="ChEBI" id="CHEBI:58115"/>
        <dbReference type="ChEBI" id="CHEBI:60487"/>
        <dbReference type="ChEBI" id="CHEBI:60493"/>
        <dbReference type="EC" id="2.7.8.26"/>
    </reaction>
</comment>
<comment type="cofactor">
    <cofactor evidence="1">
        <name>Mg(2+)</name>
        <dbReference type="ChEBI" id="CHEBI:18420"/>
    </cofactor>
</comment>
<comment type="pathway">
    <text evidence="1">Cofactor biosynthesis; adenosylcobalamin biosynthesis; adenosylcobalamin from cob(II)yrinate a,c-diamide: step 7/7.</text>
</comment>
<comment type="subcellular location">
    <subcellularLocation>
        <location evidence="1">Cell inner membrane</location>
        <topology evidence="1">Multi-pass membrane protein</topology>
    </subcellularLocation>
</comment>
<comment type="similarity">
    <text evidence="1">Belongs to the CobS family.</text>
</comment>
<name>COBS_BRUC2</name>
<organism>
    <name type="scientific">Brucella canis (strain ATCC 23365 / NCTC 10854 / RM-666)</name>
    <dbReference type="NCBI Taxonomy" id="483179"/>
    <lineage>
        <taxon>Bacteria</taxon>
        <taxon>Pseudomonadati</taxon>
        <taxon>Pseudomonadota</taxon>
        <taxon>Alphaproteobacteria</taxon>
        <taxon>Hyphomicrobiales</taxon>
        <taxon>Brucellaceae</taxon>
        <taxon>Brucella/Ochrobactrum group</taxon>
        <taxon>Brucella</taxon>
    </lineage>
</organism>
<reference key="1">
    <citation type="submission" date="2007-10" db="EMBL/GenBank/DDBJ databases">
        <title>Brucella canis ATCC 23365 whole genome shotgun sequencing project.</title>
        <authorList>
            <person name="Setubal J.C."/>
            <person name="Bowns C."/>
            <person name="Boyle S."/>
            <person name="Crasta O.R."/>
            <person name="Czar M.J."/>
            <person name="Dharmanolla C."/>
            <person name="Gillespie J.J."/>
            <person name="Kenyon R.W."/>
            <person name="Lu J."/>
            <person name="Mane S."/>
            <person name="Mohapatra S."/>
            <person name="Nagrani S."/>
            <person name="Purkayastha A."/>
            <person name="Rajasimha H.K."/>
            <person name="Shallom J.M."/>
            <person name="Shallom S."/>
            <person name="Shukla M."/>
            <person name="Snyder E.E."/>
            <person name="Sobral B.W."/>
            <person name="Wattam A.R."/>
            <person name="Will R."/>
            <person name="Williams K."/>
            <person name="Yoo H."/>
            <person name="Bruce D."/>
            <person name="Detter C."/>
            <person name="Munk C."/>
            <person name="Brettin T.S."/>
        </authorList>
    </citation>
    <scope>NUCLEOTIDE SEQUENCE [LARGE SCALE GENOMIC DNA]</scope>
    <source>
        <strain>ATCC 23365 / NCTC 10854 / RM-666</strain>
    </source>
</reference>